<gene>
    <name evidence="1" type="primary">metN</name>
    <name type="ordered locus">pRL90302</name>
</gene>
<accession>Q1M8E0</accession>
<reference key="1">
    <citation type="journal article" date="2006" name="Genome Biol.">
        <title>The genome of Rhizobium leguminosarum has recognizable core and accessory components.</title>
        <authorList>
            <person name="Young J.P.W."/>
            <person name="Crossman L.C."/>
            <person name="Johnston A.W.B."/>
            <person name="Thomson N.R."/>
            <person name="Ghazoui Z.F."/>
            <person name="Hull K.H."/>
            <person name="Wexler M."/>
            <person name="Curson A.R.J."/>
            <person name="Todd J.D."/>
            <person name="Poole P.S."/>
            <person name="Mauchline T.H."/>
            <person name="East A.K."/>
            <person name="Quail M.A."/>
            <person name="Churcher C."/>
            <person name="Arrowsmith C."/>
            <person name="Cherevach I."/>
            <person name="Chillingworth T."/>
            <person name="Clarke K."/>
            <person name="Cronin A."/>
            <person name="Davis P."/>
            <person name="Fraser A."/>
            <person name="Hance Z."/>
            <person name="Hauser H."/>
            <person name="Jagels K."/>
            <person name="Moule S."/>
            <person name="Mungall K."/>
            <person name="Norbertczak H."/>
            <person name="Rabbinowitsch E."/>
            <person name="Sanders M."/>
            <person name="Simmonds M."/>
            <person name="Whitehead S."/>
            <person name="Parkhill J."/>
        </authorList>
    </citation>
    <scope>NUCLEOTIDE SEQUENCE [LARGE SCALE GENOMIC DNA]</scope>
    <source>
        <strain>DSM 114642 / LMG 32736 / 3841</strain>
    </source>
</reference>
<feature type="chain" id="PRO_0000270364" description="Methionine import ATP-binding protein MetN">
    <location>
        <begin position="1"/>
        <end position="362"/>
    </location>
</feature>
<feature type="domain" description="ABC transporter" evidence="1">
    <location>
        <begin position="23"/>
        <end position="258"/>
    </location>
</feature>
<feature type="binding site" evidence="1">
    <location>
        <begin position="55"/>
        <end position="62"/>
    </location>
    <ligand>
        <name>ATP</name>
        <dbReference type="ChEBI" id="CHEBI:30616"/>
    </ligand>
</feature>
<proteinExistence type="inferred from homology"/>
<evidence type="ECO:0000255" key="1">
    <source>
        <dbReference type="HAMAP-Rule" id="MF_01719"/>
    </source>
</evidence>
<evidence type="ECO:0000305" key="2"/>
<name>METN_RHIJ3</name>
<keyword id="KW-0029">Amino-acid transport</keyword>
<keyword id="KW-0067">ATP-binding</keyword>
<keyword id="KW-0997">Cell inner membrane</keyword>
<keyword id="KW-1003">Cell membrane</keyword>
<keyword id="KW-0472">Membrane</keyword>
<keyword id="KW-0547">Nucleotide-binding</keyword>
<keyword id="KW-0614">Plasmid</keyword>
<keyword id="KW-1278">Translocase</keyword>
<keyword id="KW-0813">Transport</keyword>
<geneLocation type="plasmid">
    <name>pRL9</name>
</geneLocation>
<dbReference type="EC" id="7.4.2.11" evidence="1"/>
<dbReference type="EMBL" id="AM236083">
    <property type="protein sequence ID" value="CAK04031.1"/>
    <property type="status" value="ALT_INIT"/>
    <property type="molecule type" value="Genomic_DNA"/>
</dbReference>
<dbReference type="RefSeq" id="WP_041936805.1">
    <property type="nucleotide sequence ID" value="NC_008379.1"/>
</dbReference>
<dbReference type="SMR" id="Q1M8E0"/>
<dbReference type="EnsemblBacteria" id="CAK04031">
    <property type="protein sequence ID" value="CAK04031"/>
    <property type="gene ID" value="pRL90302"/>
</dbReference>
<dbReference type="KEGG" id="rle:pRL90302"/>
<dbReference type="HOGENOM" id="CLU_000604_1_3_5"/>
<dbReference type="Proteomes" id="UP000006575">
    <property type="component" value="Plasmid pRL9"/>
</dbReference>
<dbReference type="GO" id="GO:0005886">
    <property type="term" value="C:plasma membrane"/>
    <property type="evidence" value="ECO:0007669"/>
    <property type="project" value="UniProtKB-SubCell"/>
</dbReference>
<dbReference type="GO" id="GO:0033232">
    <property type="term" value="F:ABC-type D-methionine transporter activity"/>
    <property type="evidence" value="ECO:0007669"/>
    <property type="project" value="UniProtKB-EC"/>
</dbReference>
<dbReference type="GO" id="GO:0005524">
    <property type="term" value="F:ATP binding"/>
    <property type="evidence" value="ECO:0007669"/>
    <property type="project" value="UniProtKB-KW"/>
</dbReference>
<dbReference type="GO" id="GO:0016887">
    <property type="term" value="F:ATP hydrolysis activity"/>
    <property type="evidence" value="ECO:0007669"/>
    <property type="project" value="InterPro"/>
</dbReference>
<dbReference type="CDD" id="cd03258">
    <property type="entry name" value="ABC_MetN_methionine_transporter"/>
    <property type="match status" value="1"/>
</dbReference>
<dbReference type="FunFam" id="3.40.50.300:FF:000056">
    <property type="entry name" value="Cell division ATP-binding protein FtsE"/>
    <property type="match status" value="1"/>
</dbReference>
<dbReference type="Gene3D" id="3.30.70.260">
    <property type="match status" value="1"/>
</dbReference>
<dbReference type="Gene3D" id="3.40.50.300">
    <property type="entry name" value="P-loop containing nucleotide triphosphate hydrolases"/>
    <property type="match status" value="1"/>
</dbReference>
<dbReference type="InterPro" id="IPR003593">
    <property type="entry name" value="AAA+_ATPase"/>
</dbReference>
<dbReference type="InterPro" id="IPR003439">
    <property type="entry name" value="ABC_transporter-like_ATP-bd"/>
</dbReference>
<dbReference type="InterPro" id="IPR017871">
    <property type="entry name" value="ABC_transporter-like_CS"/>
</dbReference>
<dbReference type="InterPro" id="IPR045865">
    <property type="entry name" value="ACT-like_dom_sf"/>
</dbReference>
<dbReference type="InterPro" id="IPR041701">
    <property type="entry name" value="MetN_ABC"/>
</dbReference>
<dbReference type="InterPro" id="IPR050086">
    <property type="entry name" value="MetN_ABC_transporter-like"/>
</dbReference>
<dbReference type="InterPro" id="IPR018449">
    <property type="entry name" value="NIL_domain"/>
</dbReference>
<dbReference type="InterPro" id="IPR027417">
    <property type="entry name" value="P-loop_NTPase"/>
</dbReference>
<dbReference type="PANTHER" id="PTHR43166">
    <property type="entry name" value="AMINO ACID IMPORT ATP-BINDING PROTEIN"/>
    <property type="match status" value="1"/>
</dbReference>
<dbReference type="PANTHER" id="PTHR43166:SF30">
    <property type="entry name" value="METHIONINE IMPORT ATP-BINDING PROTEIN METN"/>
    <property type="match status" value="1"/>
</dbReference>
<dbReference type="Pfam" id="PF00005">
    <property type="entry name" value="ABC_tran"/>
    <property type="match status" value="1"/>
</dbReference>
<dbReference type="Pfam" id="PF09383">
    <property type="entry name" value="NIL"/>
    <property type="match status" value="1"/>
</dbReference>
<dbReference type="SMART" id="SM00382">
    <property type="entry name" value="AAA"/>
    <property type="match status" value="1"/>
</dbReference>
<dbReference type="SMART" id="SM00930">
    <property type="entry name" value="NIL"/>
    <property type="match status" value="1"/>
</dbReference>
<dbReference type="SUPFAM" id="SSF55021">
    <property type="entry name" value="ACT-like"/>
    <property type="match status" value="1"/>
</dbReference>
<dbReference type="SUPFAM" id="SSF52540">
    <property type="entry name" value="P-loop containing nucleoside triphosphate hydrolases"/>
    <property type="match status" value="1"/>
</dbReference>
<dbReference type="PROSITE" id="PS00211">
    <property type="entry name" value="ABC_TRANSPORTER_1"/>
    <property type="match status" value="1"/>
</dbReference>
<dbReference type="PROSITE" id="PS50893">
    <property type="entry name" value="ABC_TRANSPORTER_2"/>
    <property type="match status" value="1"/>
</dbReference>
<dbReference type="PROSITE" id="PS51264">
    <property type="entry name" value="METN"/>
    <property type="match status" value="1"/>
</dbReference>
<sequence>MNSLVSTTAIEAQSQAAASEEVVRLTDVKRRFGTTAALDGISLTVKRGEILGIIGRSGAGKSTLIRCLNGLERADSGEILIEGRDITGLSEQELQPLRRRIGMIFQHFNLLSAKTVEENVALPLKIEGLAKSERLKRAHELLELVGLADKAKAYPASLSGGQKQRVGIARALAARPALLLSDEATSALDPETTRSILALLKDINRKLGLTILLITHEMEVVRGIADRVAVIDAGRIVEEGQVWSVFANPQAEITGSLLCGIRPQLPEHIAGRLSAAAGSEAILSVDLAGPQAQGALFAELSAALPHSFRLVHGGIDHIQNQPVARFFIAVPARDPALAGKVEQFLTARSARVEVLGYDTDHA</sequence>
<comment type="function">
    <text evidence="1">Part of the ABC transporter complex MetNIQ involved in methionine import. Responsible for energy coupling to the transport system.</text>
</comment>
<comment type="catalytic activity">
    <reaction evidence="1">
        <text>L-methionine(out) + ATP + H2O = L-methionine(in) + ADP + phosphate + H(+)</text>
        <dbReference type="Rhea" id="RHEA:29779"/>
        <dbReference type="ChEBI" id="CHEBI:15377"/>
        <dbReference type="ChEBI" id="CHEBI:15378"/>
        <dbReference type="ChEBI" id="CHEBI:30616"/>
        <dbReference type="ChEBI" id="CHEBI:43474"/>
        <dbReference type="ChEBI" id="CHEBI:57844"/>
        <dbReference type="ChEBI" id="CHEBI:456216"/>
        <dbReference type="EC" id="7.4.2.11"/>
    </reaction>
</comment>
<comment type="catalytic activity">
    <reaction evidence="1">
        <text>D-methionine(out) + ATP + H2O = D-methionine(in) + ADP + phosphate + H(+)</text>
        <dbReference type="Rhea" id="RHEA:29767"/>
        <dbReference type="ChEBI" id="CHEBI:15377"/>
        <dbReference type="ChEBI" id="CHEBI:15378"/>
        <dbReference type="ChEBI" id="CHEBI:30616"/>
        <dbReference type="ChEBI" id="CHEBI:43474"/>
        <dbReference type="ChEBI" id="CHEBI:57932"/>
        <dbReference type="ChEBI" id="CHEBI:456216"/>
        <dbReference type="EC" id="7.4.2.11"/>
    </reaction>
</comment>
<comment type="subunit">
    <text evidence="1">The complex is composed of two ATP-binding proteins (MetN), two transmembrane proteins (MetI) and a solute-binding protein (MetQ).</text>
</comment>
<comment type="subcellular location">
    <subcellularLocation>
        <location evidence="1">Cell inner membrane</location>
        <topology evidence="1">Peripheral membrane protein</topology>
    </subcellularLocation>
</comment>
<comment type="similarity">
    <text evidence="1">Belongs to the ABC transporter superfamily. Methionine importer (TC 3.A.1.24) family.</text>
</comment>
<comment type="sequence caution" evidence="2">
    <conflict type="erroneous initiation">
        <sequence resource="EMBL-CDS" id="CAK04031"/>
    </conflict>
</comment>
<protein>
    <recommendedName>
        <fullName evidence="1">Methionine import ATP-binding protein MetN</fullName>
        <ecNumber evidence="1">7.4.2.11</ecNumber>
    </recommendedName>
</protein>
<organism>
    <name type="scientific">Rhizobium johnstonii (strain DSM 114642 / LMG 32736 / 3841)</name>
    <name type="common">Rhizobium leguminosarum bv. viciae</name>
    <dbReference type="NCBI Taxonomy" id="216596"/>
    <lineage>
        <taxon>Bacteria</taxon>
        <taxon>Pseudomonadati</taxon>
        <taxon>Pseudomonadota</taxon>
        <taxon>Alphaproteobacteria</taxon>
        <taxon>Hyphomicrobiales</taxon>
        <taxon>Rhizobiaceae</taxon>
        <taxon>Rhizobium/Agrobacterium group</taxon>
        <taxon>Rhizobium</taxon>
        <taxon>Rhizobium johnstonii</taxon>
    </lineage>
</organism>